<accession>Q96BY7</accession>
<accession>Q6ZRE7</accession>
<accession>Q96DQ3</accession>
<accession>Q9NW80</accession>
<sequence>MPWPFSESIKKRACRYLLQRYLGHFLQEKLSLEQLSLDLYQGTGSLAQVPLDKWCLNEILESADAPLEVTEGFIQSISLSVPWGSLLQDNCALEVRGLEMVFRPRPRPATGSEPMYWSSFMTSSMQLAKECLSQKLTDEQGEGSQPFEGLEKFAETIETVLRRVKVTFIDTVLRIEHVPENSKTGTALEIRIERTVYCDETADESSGINVHQPTAFAHKLLQLSGVSLFWDEFSASAKSSPVCSTAPVETEPKLSPSWNPKIIYEPHPQLTRNLPEIAPSDPVQIGRLIGRLELSLTLKQNEVLPGAKLDVDGQIDSIHLLLSPRQVHLLLDMLAAIAGPENSSKIGLANKDRKNRPMQQEDEYRIQMELNRYYLRKDSLSVGVSSEQSFYETETARTPSSREEEVFFSMADMDMSHSLSSLPPLGDPPNMDLELSLTSTYTNTPAGSPLSATVLQPTWGEFLDHHKEQPVRGSTFPSNLVHPTPLQKTSLPSRSVSVDESRPELIFRLAVGTFSISVLHIDPLSPPETSQNLNPLTPMAVAFFTCIEKIDPARFSTEDFKSFRAVFAEACSHDHLRFIGTGIKVSYEQRQRSASRYFSTDMSIGQMEFLECLFPTDFHSVPPHYTELLTFHSKEETGSHSPVCLQLHYKHSENRGPQGNQARLSSVPHKAELQIKLNPVCCELDISIVDRLNSLLQPQKLATVEMMASHMYTSYNKHISLHKAFTEVFLDDSHSPANCRISVQVATPALNLSVRFPIPDLRSDQERGPWFKKSLQKEILYLAFTDLEFKTEFIGGSTPEQIKLELTFRELIGSFQEEKGDPSIKFFHVSSGVDGDTTSSDDFDWPRIVLKINPPAMHSILERIAAEEEEENDGHYQEEEEGGAHSLKDVCDLRRPAPSPFSSRRVMFENEQMVMPGDPVEMTEFQDKAISNSHYVLELTLPNIYVTLPNKSFYEKLYNRIFNDLLLWEPTAPSPVETFENISYGIGLSVASQLINTFNKDSFSAFKSAVHYDEESGSEEETLQYFSTVDPNYRSRRKKKLDSQNKNSQSFLSVLLNINHGLIAVFTDVKQDNGDLLENKHGEFWLEFNSGSLFCVTKYEGFDDKHYICLHSSSFSLYHKGIVNGVILPTETRLPSSTRPHWLEPTIYSSEEDGLSKTSSDGVGGDSLNMLSVAVKILSDKSESNTKEFLIAVGLKGATLQHRMLPSGLSWHEQILYFLNIADEPVLGYNPPTSFTTFHVHLWSCALDYRPLYLPIRSLLTVETFSVSSSVALDKSSSTLRIILDEAALHLSDKCNTVTINLSRDYVRVMDMGLLELTITAVKSDSDGEQTEPRFELHCSSDVVHIRTCSDSCAALMNLIQYIASYGDLQTPNKADMKPGAFQRRSKVDSSGRSSSRGPVLPEADQQMLRDLMSDAMEEIDMQQGTSSVKPQANGVLDEKSQIQEPCCSDLFLFPDESGNVSQESGPTYASFSHHFISDAMTGVPTENDDFCILFAPKAAMQEKEEEPVIKIMVDDAIVIRDNYFSLPVNKTDTSKAPLHFPIPVIRYVVKEVSLVWHLYGGKDFGIVPPTSPAKSYISPHSSPSHTPTRHGRNTVCGGKGRNHDFLMEIQLSKVKFQHEVYPPCKPDCDSSLSEHPVSRQVFIVQDLEIRDRLATSQMNKFLYLYCSKEMPRKAHSNMLTVKALHVCPESGRSPQECCLRVSLMPLRLNIDQDALFFLKDFFTSLSAEVELQMTPDPEVKKSPGADVTCSLPRHLSTSKEPNLVISFSGPKQPSQNDSANSVEVVNGMEEKNFSAEEASFRDQPVFFREFRFTSEVPIRLDYHGKHVSMDQGTLAGILIGLAQLNCSELKLKRLSYRHGLLGVDKLFSYAITEWLNDIKKNQLPGILGGVGPMHSLVQLVQGLKDLVWLPIEQYRKDGRIVRGFQRGAASFGTSTAMAALELTNRMVQTIQAAAETAYDMVSPGTLSIEPKKTKRFPHHRLAHQPVDLREGVAKAYSVVKEGITDTAQTIYETAAREHESRGVTGAVGEVLRQIPPAVVKPLIVATEATSNVLGGMRNQIRPDVRQDESQKWRHGDD</sequence>
<protein>
    <recommendedName>
        <fullName evidence="11">Autophagy-related protein 2 homolog B</fullName>
    </recommendedName>
</protein>
<name>ATG2B_HUMAN</name>
<dbReference type="EMBL" id="AL355102">
    <property type="status" value="NOT_ANNOTATED_CDS"/>
    <property type="molecule type" value="Genomic_DNA"/>
</dbReference>
<dbReference type="EMBL" id="AL359240">
    <property type="status" value="NOT_ANNOTATED_CDS"/>
    <property type="molecule type" value="Genomic_DNA"/>
</dbReference>
<dbReference type="EMBL" id="AK001104">
    <property type="protein sequence ID" value="BAA91504.1"/>
    <property type="status" value="ALT_INIT"/>
    <property type="molecule type" value="mRNA"/>
</dbReference>
<dbReference type="EMBL" id="AK055200">
    <property type="protein sequence ID" value="BAB70872.1"/>
    <property type="status" value="ALT_SEQ"/>
    <property type="molecule type" value="mRNA"/>
</dbReference>
<dbReference type="EMBL" id="AK128275">
    <property type="protein sequence ID" value="BAC87363.1"/>
    <property type="status" value="ALT_INIT"/>
    <property type="molecule type" value="mRNA"/>
</dbReference>
<dbReference type="EMBL" id="BC015016">
    <property type="protein sequence ID" value="AAH15016.3"/>
    <property type="molecule type" value="mRNA"/>
</dbReference>
<dbReference type="CCDS" id="CCDS9944.2"/>
<dbReference type="RefSeq" id="NP_060506.5">
    <property type="nucleotide sequence ID" value="NM_018036.6"/>
</dbReference>
<dbReference type="BioGRID" id="120412">
    <property type="interactions" value="91"/>
</dbReference>
<dbReference type="CORUM" id="Q96BY7"/>
<dbReference type="FunCoup" id="Q96BY7">
    <property type="interactions" value="1327"/>
</dbReference>
<dbReference type="IntAct" id="Q96BY7">
    <property type="interactions" value="51"/>
</dbReference>
<dbReference type="MINT" id="Q96BY7"/>
<dbReference type="STRING" id="9606.ENSP00000353010"/>
<dbReference type="TCDB" id="9.A.15.2.1">
    <property type="family name" value="the autophagy-related phagophore-formation transporter (apt) family"/>
</dbReference>
<dbReference type="GlyCosmos" id="Q96BY7">
    <property type="glycosylation" value="1 site, 1 glycan"/>
</dbReference>
<dbReference type="GlyGen" id="Q96BY7">
    <property type="glycosylation" value="1 site, 1 O-linked glycan (1 site)"/>
</dbReference>
<dbReference type="iPTMnet" id="Q96BY7"/>
<dbReference type="PhosphoSitePlus" id="Q96BY7"/>
<dbReference type="SwissPalm" id="Q96BY7"/>
<dbReference type="BioMuta" id="ATG2B"/>
<dbReference type="DMDM" id="308153682"/>
<dbReference type="jPOST" id="Q96BY7"/>
<dbReference type="MassIVE" id="Q96BY7"/>
<dbReference type="PaxDb" id="9606-ENSP00000353010"/>
<dbReference type="PeptideAtlas" id="Q96BY7"/>
<dbReference type="ProteomicsDB" id="76129"/>
<dbReference type="Pumba" id="Q96BY7"/>
<dbReference type="Antibodypedia" id="94">
    <property type="antibodies" value="143 antibodies from 28 providers"/>
</dbReference>
<dbReference type="DNASU" id="55102"/>
<dbReference type="Ensembl" id="ENST00000359933.6">
    <property type="protein sequence ID" value="ENSP00000353010.4"/>
    <property type="gene ID" value="ENSG00000066739.12"/>
</dbReference>
<dbReference type="GeneID" id="55102"/>
<dbReference type="KEGG" id="hsa:55102"/>
<dbReference type="MANE-Select" id="ENST00000359933.6">
    <property type="protein sequence ID" value="ENSP00000353010.4"/>
    <property type="RefSeq nucleotide sequence ID" value="NM_018036.7"/>
    <property type="RefSeq protein sequence ID" value="NP_060506.6"/>
</dbReference>
<dbReference type="UCSC" id="uc001yfi.4">
    <property type="organism name" value="human"/>
</dbReference>
<dbReference type="AGR" id="HGNC:20187"/>
<dbReference type="CTD" id="55102"/>
<dbReference type="DisGeNET" id="55102"/>
<dbReference type="GeneCards" id="ATG2B"/>
<dbReference type="HGNC" id="HGNC:20187">
    <property type="gene designation" value="ATG2B"/>
</dbReference>
<dbReference type="HPA" id="ENSG00000066739">
    <property type="expression patterns" value="Low tissue specificity"/>
</dbReference>
<dbReference type="MalaCards" id="ATG2B"/>
<dbReference type="MIM" id="616226">
    <property type="type" value="gene"/>
</dbReference>
<dbReference type="neXtProt" id="NX_Q96BY7"/>
<dbReference type="OpenTargets" id="ENSG00000066739"/>
<dbReference type="PharmGKB" id="PA162377102"/>
<dbReference type="VEuPathDB" id="HostDB:ENSG00000066739"/>
<dbReference type="eggNOG" id="KOG2993">
    <property type="taxonomic scope" value="Eukaryota"/>
</dbReference>
<dbReference type="GeneTree" id="ENSGT00620000087966"/>
<dbReference type="HOGENOM" id="CLU_001781_0_0_1"/>
<dbReference type="InParanoid" id="Q96BY7"/>
<dbReference type="OMA" id="VDNHFCL"/>
<dbReference type="OrthoDB" id="18982at2759"/>
<dbReference type="PAN-GO" id="Q96BY7">
    <property type="GO annotations" value="8 GO annotations based on evolutionary models"/>
</dbReference>
<dbReference type="PhylomeDB" id="Q96BY7"/>
<dbReference type="TreeFam" id="TF313482"/>
<dbReference type="PathwayCommons" id="Q96BY7"/>
<dbReference type="SignaLink" id="Q96BY7"/>
<dbReference type="SIGNOR" id="Q96BY7"/>
<dbReference type="BioGRID-ORCS" id="55102">
    <property type="hits" value="11 hits in 1154 CRISPR screens"/>
</dbReference>
<dbReference type="ChiTaRS" id="ATG2B">
    <property type="organism name" value="human"/>
</dbReference>
<dbReference type="GenomeRNAi" id="55102"/>
<dbReference type="Pharos" id="Q96BY7">
    <property type="development level" value="Tbio"/>
</dbReference>
<dbReference type="PRO" id="PR:Q96BY7"/>
<dbReference type="Proteomes" id="UP000005640">
    <property type="component" value="Chromosome 14"/>
</dbReference>
<dbReference type="RNAct" id="Q96BY7">
    <property type="molecule type" value="protein"/>
</dbReference>
<dbReference type="Bgee" id="ENSG00000066739">
    <property type="expression patterns" value="Expressed in Brodmann (1909) area 23 and 189 other cell types or tissues"/>
</dbReference>
<dbReference type="GO" id="GO:0005783">
    <property type="term" value="C:endoplasmic reticulum"/>
    <property type="evidence" value="ECO:0000314"/>
    <property type="project" value="HPA"/>
</dbReference>
<dbReference type="GO" id="GO:0005789">
    <property type="term" value="C:endoplasmic reticulum membrane"/>
    <property type="evidence" value="ECO:0007669"/>
    <property type="project" value="UniProtKB-SubCell"/>
</dbReference>
<dbReference type="GO" id="GO:0043231">
    <property type="term" value="C:intracellular membrane-bounded organelle"/>
    <property type="evidence" value="ECO:0000314"/>
    <property type="project" value="HPA"/>
</dbReference>
<dbReference type="GO" id="GO:0005811">
    <property type="term" value="C:lipid droplet"/>
    <property type="evidence" value="ECO:0007669"/>
    <property type="project" value="UniProtKB-SubCell"/>
</dbReference>
<dbReference type="GO" id="GO:0061908">
    <property type="term" value="C:phagophore"/>
    <property type="evidence" value="ECO:0000318"/>
    <property type="project" value="GO_Central"/>
</dbReference>
<dbReference type="GO" id="GO:0000407">
    <property type="term" value="C:phagophore assembly site"/>
    <property type="evidence" value="ECO:0000318"/>
    <property type="project" value="GO_Central"/>
</dbReference>
<dbReference type="GO" id="GO:0034045">
    <property type="term" value="C:phagophore assembly site membrane"/>
    <property type="evidence" value="ECO:0007669"/>
    <property type="project" value="UniProtKB-SubCell"/>
</dbReference>
<dbReference type="GO" id="GO:0120013">
    <property type="term" value="F:lipid transfer activity"/>
    <property type="evidence" value="ECO:0000314"/>
    <property type="project" value="GO_Central"/>
</dbReference>
<dbReference type="GO" id="GO:0032266">
    <property type="term" value="F:phosphatidylinositol-3-phosphate binding"/>
    <property type="evidence" value="ECO:0000318"/>
    <property type="project" value="GO_Central"/>
</dbReference>
<dbReference type="GO" id="GO:0043495">
    <property type="term" value="F:protein-membrane adaptor activity"/>
    <property type="evidence" value="ECO:0000318"/>
    <property type="project" value="GO_Central"/>
</dbReference>
<dbReference type="GO" id="GO:0000045">
    <property type="term" value="P:autophagosome assembly"/>
    <property type="evidence" value="ECO:0000318"/>
    <property type="project" value="GO_Central"/>
</dbReference>
<dbReference type="GO" id="GO:0000422">
    <property type="term" value="P:autophagy of mitochondrion"/>
    <property type="evidence" value="ECO:0000318"/>
    <property type="project" value="GO_Central"/>
</dbReference>
<dbReference type="GO" id="GO:0061723">
    <property type="term" value="P:glycophagy"/>
    <property type="evidence" value="ECO:0000318"/>
    <property type="project" value="GO_Central"/>
</dbReference>
<dbReference type="GO" id="GO:0000425">
    <property type="term" value="P:pexophagy"/>
    <property type="evidence" value="ECO:0000318"/>
    <property type="project" value="GO_Central"/>
</dbReference>
<dbReference type="GO" id="GO:0034727">
    <property type="term" value="P:piecemeal microautophagy of the nucleus"/>
    <property type="evidence" value="ECO:0000318"/>
    <property type="project" value="GO_Central"/>
</dbReference>
<dbReference type="GO" id="GO:0061709">
    <property type="term" value="P:reticulophagy"/>
    <property type="evidence" value="ECO:0000318"/>
    <property type="project" value="GO_Central"/>
</dbReference>
<dbReference type="InterPro" id="IPR026849">
    <property type="entry name" value="ATG2"/>
</dbReference>
<dbReference type="PANTHER" id="PTHR13190">
    <property type="entry name" value="AUTOPHAGY-RELATED 2, ISOFORM A"/>
    <property type="match status" value="1"/>
</dbReference>
<dbReference type="PANTHER" id="PTHR13190:SF20">
    <property type="entry name" value="AUTOPHAGY-RELATED PROTEIN 2 HOMOLOG B"/>
    <property type="match status" value="1"/>
</dbReference>
<dbReference type="Pfam" id="PF13329">
    <property type="entry name" value="ATG2_CAD"/>
    <property type="match status" value="2"/>
</dbReference>
<proteinExistence type="evidence at protein level"/>
<feature type="chain" id="PRO_0000089909" description="Autophagy-related protein 2 homolog B">
    <location>
        <begin position="1"/>
        <end position="2078"/>
    </location>
</feature>
<feature type="domain" description="Chorein N-terminal" evidence="4">
    <location>
        <begin position="13"/>
        <end position="108"/>
    </location>
</feature>
<feature type="region of interest" description="Disordered" evidence="5">
    <location>
        <begin position="473"/>
        <end position="495"/>
    </location>
</feature>
<feature type="region of interest" description="Disordered" evidence="5">
    <location>
        <begin position="868"/>
        <end position="888"/>
    </location>
</feature>
<feature type="region of interest" description="Disordered" evidence="5">
    <location>
        <begin position="1375"/>
        <end position="1405"/>
    </location>
</feature>
<feature type="compositionally biased region" description="Polar residues" evidence="5">
    <location>
        <begin position="486"/>
        <end position="495"/>
    </location>
</feature>
<feature type="compositionally biased region" description="Basic and acidic residues" evidence="5">
    <location>
        <begin position="873"/>
        <end position="888"/>
    </location>
</feature>
<feature type="modified residue" description="Phosphoserine" evidence="15 16">
    <location>
        <position position="255"/>
    </location>
</feature>
<feature type="modified residue" description="Phosphoserine" evidence="3">
    <location>
        <position position="379"/>
    </location>
</feature>
<feature type="modified residue" description="Phosphoserine" evidence="14">
    <location>
        <position position="497"/>
    </location>
</feature>
<feature type="modified residue" description="Phosphoserine" evidence="15">
    <location>
        <position position="840"/>
    </location>
</feature>
<feature type="modified residue" description="Phosphoserine" evidence="16">
    <location>
        <position position="886"/>
    </location>
</feature>
<feature type="modified residue" description="Phosphoserine" evidence="15">
    <location>
        <position position="899"/>
    </location>
</feature>
<feature type="modified residue" description="Phosphoserine" evidence="3">
    <location>
        <position position="1008"/>
    </location>
</feature>
<feature type="modified residue" description="Phosphotyrosine" evidence="3">
    <location>
        <position position="1012"/>
    </location>
</feature>
<feature type="modified residue" description="Phosphoserine" evidence="3">
    <location>
        <position position="1016"/>
    </location>
</feature>
<feature type="modified residue" description="Phosphoserine" evidence="16">
    <location>
        <position position="1018"/>
    </location>
</feature>
<feature type="modified residue" description="Phosphothreonine" evidence="3">
    <location>
        <position position="1022"/>
    </location>
</feature>
<feature type="modified residue" description="Phosphoserine" evidence="16">
    <location>
        <position position="1526"/>
    </location>
</feature>
<feature type="sequence variant" id="VAR_045956" description="In dbSNP:rs9323945." evidence="6">
    <original>N</original>
    <variation>D</variation>
    <location>
        <position position="1124"/>
    </location>
</feature>
<feature type="sequence variant" id="VAR_021523" description="In dbSNP:rs3759601." evidence="6 7">
    <original>Q</original>
    <variation>E</variation>
    <location>
        <position position="1383"/>
    </location>
</feature>
<feature type="sequence variant" id="VAR_023096" description="In dbSNP:rs2289622." evidence="6 7">
    <original>I</original>
    <variation>T</variation>
    <location>
        <position position="1567"/>
    </location>
</feature>
<feature type="mutagenesis site" description="Strongly reduced interaction with WDR45/WIPI4." evidence="9">
    <original>YFS</original>
    <variation>AAA</variation>
    <location>
        <begin position="1025"/>
        <end position="1027"/>
    </location>
</feature>
<feature type="sequence conflict" description="In Ref. 2; BAB70872." evidence="12" ref="2">
    <original>Q</original>
    <variation>R</variation>
    <location>
        <position position="765"/>
    </location>
</feature>
<feature type="sequence conflict" description="In Ref. 2; BAA91504." evidence="12" ref="2">
    <original>K</original>
    <variation>E</variation>
    <location>
        <position position="1905"/>
    </location>
</feature>
<feature type="sequence conflict" description="In Ref. 2; BAC87363." evidence="12" ref="2">
    <original>F</original>
    <variation>S</variation>
    <location>
        <position position="1932"/>
    </location>
</feature>
<feature type="sequence conflict" description="In Ref. 2; BAA91504." evidence="12" ref="2">
    <original>R</original>
    <variation>G</variation>
    <location>
        <position position="2062"/>
    </location>
</feature>
<keyword id="KW-0072">Autophagy</keyword>
<keyword id="KW-0256">Endoplasmic reticulum</keyword>
<keyword id="KW-0551">Lipid droplet</keyword>
<keyword id="KW-0445">Lipid transport</keyword>
<keyword id="KW-0472">Membrane</keyword>
<keyword id="KW-0597">Phosphoprotein</keyword>
<keyword id="KW-1267">Proteomics identification</keyword>
<keyword id="KW-1185">Reference proteome</keyword>
<keyword id="KW-0813">Transport</keyword>
<reference key="1">
    <citation type="journal article" date="2003" name="Nature">
        <title>The DNA sequence and analysis of human chromosome 14.</title>
        <authorList>
            <person name="Heilig R."/>
            <person name="Eckenberg R."/>
            <person name="Petit J.-L."/>
            <person name="Fonknechten N."/>
            <person name="Da Silva C."/>
            <person name="Cattolico L."/>
            <person name="Levy M."/>
            <person name="Barbe V."/>
            <person name="De Berardinis V."/>
            <person name="Ureta-Vidal A."/>
            <person name="Pelletier E."/>
            <person name="Vico V."/>
            <person name="Anthouard V."/>
            <person name="Rowen L."/>
            <person name="Madan A."/>
            <person name="Qin S."/>
            <person name="Sun H."/>
            <person name="Du H."/>
            <person name="Pepin K."/>
            <person name="Artiguenave F."/>
            <person name="Robert C."/>
            <person name="Cruaud C."/>
            <person name="Bruels T."/>
            <person name="Jaillon O."/>
            <person name="Friedlander L."/>
            <person name="Samson G."/>
            <person name="Brottier P."/>
            <person name="Cure S."/>
            <person name="Segurens B."/>
            <person name="Aniere F."/>
            <person name="Samain S."/>
            <person name="Crespeau H."/>
            <person name="Abbasi N."/>
            <person name="Aiach N."/>
            <person name="Boscus D."/>
            <person name="Dickhoff R."/>
            <person name="Dors M."/>
            <person name="Dubois I."/>
            <person name="Friedman C."/>
            <person name="Gouyvenoux M."/>
            <person name="James R."/>
            <person name="Madan A."/>
            <person name="Mairey-Estrada B."/>
            <person name="Mangenot S."/>
            <person name="Martins N."/>
            <person name="Menard M."/>
            <person name="Oztas S."/>
            <person name="Ratcliffe A."/>
            <person name="Shaffer T."/>
            <person name="Trask B."/>
            <person name="Vacherie B."/>
            <person name="Bellemere C."/>
            <person name="Belser C."/>
            <person name="Besnard-Gonnet M."/>
            <person name="Bartol-Mavel D."/>
            <person name="Boutard M."/>
            <person name="Briez-Silla S."/>
            <person name="Combette S."/>
            <person name="Dufosse-Laurent V."/>
            <person name="Ferron C."/>
            <person name="Lechaplais C."/>
            <person name="Louesse C."/>
            <person name="Muselet D."/>
            <person name="Magdelenat G."/>
            <person name="Pateau E."/>
            <person name="Petit E."/>
            <person name="Sirvain-Trukniewicz P."/>
            <person name="Trybou A."/>
            <person name="Vega-Czarny N."/>
            <person name="Bataille E."/>
            <person name="Bluet E."/>
            <person name="Bordelais I."/>
            <person name="Dubois M."/>
            <person name="Dumont C."/>
            <person name="Guerin T."/>
            <person name="Haffray S."/>
            <person name="Hammadi R."/>
            <person name="Muanga J."/>
            <person name="Pellouin V."/>
            <person name="Robert D."/>
            <person name="Wunderle E."/>
            <person name="Gauguet G."/>
            <person name="Roy A."/>
            <person name="Sainte-Marthe L."/>
            <person name="Verdier J."/>
            <person name="Verdier-Discala C."/>
            <person name="Hillier L.W."/>
            <person name="Fulton L."/>
            <person name="McPherson J."/>
            <person name="Matsuda F."/>
            <person name="Wilson R."/>
            <person name="Scarpelli C."/>
            <person name="Gyapay G."/>
            <person name="Wincker P."/>
            <person name="Saurin W."/>
            <person name="Quetier F."/>
            <person name="Waterston R."/>
            <person name="Hood L."/>
            <person name="Weissenbach J."/>
        </authorList>
    </citation>
    <scope>NUCLEOTIDE SEQUENCE [LARGE SCALE GENOMIC DNA]</scope>
</reference>
<reference key="2">
    <citation type="journal article" date="2004" name="Nat. Genet.">
        <title>Complete sequencing and characterization of 21,243 full-length human cDNAs.</title>
        <authorList>
            <person name="Ota T."/>
            <person name="Suzuki Y."/>
            <person name="Nishikawa T."/>
            <person name="Otsuki T."/>
            <person name="Sugiyama T."/>
            <person name="Irie R."/>
            <person name="Wakamatsu A."/>
            <person name="Hayashi K."/>
            <person name="Sato H."/>
            <person name="Nagai K."/>
            <person name="Kimura K."/>
            <person name="Makita H."/>
            <person name="Sekine M."/>
            <person name="Obayashi M."/>
            <person name="Nishi T."/>
            <person name="Shibahara T."/>
            <person name="Tanaka T."/>
            <person name="Ishii S."/>
            <person name="Yamamoto J."/>
            <person name="Saito K."/>
            <person name="Kawai Y."/>
            <person name="Isono Y."/>
            <person name="Nakamura Y."/>
            <person name="Nagahari K."/>
            <person name="Murakami K."/>
            <person name="Yasuda T."/>
            <person name="Iwayanagi T."/>
            <person name="Wagatsuma M."/>
            <person name="Shiratori A."/>
            <person name="Sudo H."/>
            <person name="Hosoiri T."/>
            <person name="Kaku Y."/>
            <person name="Kodaira H."/>
            <person name="Kondo H."/>
            <person name="Sugawara M."/>
            <person name="Takahashi M."/>
            <person name="Kanda K."/>
            <person name="Yokoi T."/>
            <person name="Furuya T."/>
            <person name="Kikkawa E."/>
            <person name="Omura Y."/>
            <person name="Abe K."/>
            <person name="Kamihara K."/>
            <person name="Katsuta N."/>
            <person name="Sato K."/>
            <person name="Tanikawa M."/>
            <person name="Yamazaki M."/>
            <person name="Ninomiya K."/>
            <person name="Ishibashi T."/>
            <person name="Yamashita H."/>
            <person name="Murakawa K."/>
            <person name="Fujimori K."/>
            <person name="Tanai H."/>
            <person name="Kimata M."/>
            <person name="Watanabe M."/>
            <person name="Hiraoka S."/>
            <person name="Chiba Y."/>
            <person name="Ishida S."/>
            <person name="Ono Y."/>
            <person name="Takiguchi S."/>
            <person name="Watanabe S."/>
            <person name="Yosida M."/>
            <person name="Hotuta T."/>
            <person name="Kusano J."/>
            <person name="Kanehori K."/>
            <person name="Takahashi-Fujii A."/>
            <person name="Hara H."/>
            <person name="Tanase T.-O."/>
            <person name="Nomura Y."/>
            <person name="Togiya S."/>
            <person name="Komai F."/>
            <person name="Hara R."/>
            <person name="Takeuchi K."/>
            <person name="Arita M."/>
            <person name="Imose N."/>
            <person name="Musashino K."/>
            <person name="Yuuki H."/>
            <person name="Oshima A."/>
            <person name="Sasaki N."/>
            <person name="Aotsuka S."/>
            <person name="Yoshikawa Y."/>
            <person name="Matsunawa H."/>
            <person name="Ichihara T."/>
            <person name="Shiohata N."/>
            <person name="Sano S."/>
            <person name="Moriya S."/>
            <person name="Momiyama H."/>
            <person name="Satoh N."/>
            <person name="Takami S."/>
            <person name="Terashima Y."/>
            <person name="Suzuki O."/>
            <person name="Nakagawa S."/>
            <person name="Senoh A."/>
            <person name="Mizoguchi H."/>
            <person name="Goto Y."/>
            <person name="Shimizu F."/>
            <person name="Wakebe H."/>
            <person name="Hishigaki H."/>
            <person name="Watanabe T."/>
            <person name="Sugiyama A."/>
            <person name="Takemoto M."/>
            <person name="Kawakami B."/>
            <person name="Yamazaki M."/>
            <person name="Watanabe K."/>
            <person name="Kumagai A."/>
            <person name="Itakura S."/>
            <person name="Fukuzumi Y."/>
            <person name="Fujimori Y."/>
            <person name="Komiyama M."/>
            <person name="Tashiro H."/>
            <person name="Tanigami A."/>
            <person name="Fujiwara T."/>
            <person name="Ono T."/>
            <person name="Yamada K."/>
            <person name="Fujii Y."/>
            <person name="Ozaki K."/>
            <person name="Hirao M."/>
            <person name="Ohmori Y."/>
            <person name="Kawabata A."/>
            <person name="Hikiji T."/>
            <person name="Kobatake N."/>
            <person name="Inagaki H."/>
            <person name="Ikema Y."/>
            <person name="Okamoto S."/>
            <person name="Okitani R."/>
            <person name="Kawakami T."/>
            <person name="Noguchi S."/>
            <person name="Itoh T."/>
            <person name="Shigeta K."/>
            <person name="Senba T."/>
            <person name="Matsumura K."/>
            <person name="Nakajima Y."/>
            <person name="Mizuno T."/>
            <person name="Morinaga M."/>
            <person name="Sasaki M."/>
            <person name="Togashi T."/>
            <person name="Oyama M."/>
            <person name="Hata H."/>
            <person name="Watanabe M."/>
            <person name="Komatsu T."/>
            <person name="Mizushima-Sugano J."/>
            <person name="Satoh T."/>
            <person name="Shirai Y."/>
            <person name="Takahashi Y."/>
            <person name="Nakagawa K."/>
            <person name="Okumura K."/>
            <person name="Nagase T."/>
            <person name="Nomura N."/>
            <person name="Kikuchi H."/>
            <person name="Masuho Y."/>
            <person name="Yamashita R."/>
            <person name="Nakai K."/>
            <person name="Yada T."/>
            <person name="Nakamura Y."/>
            <person name="Ohara O."/>
            <person name="Isogai T."/>
            <person name="Sugano S."/>
        </authorList>
    </citation>
    <scope>NUCLEOTIDE SEQUENCE [LARGE SCALE MRNA] OF 1-800 AND 1065-2078</scope>
    <scope>VARIANTS ASP-1124; GLU-1383 AND THR-1567</scope>
    <source>
        <tissue>Embryo</tissue>
        <tissue>Thymus</tissue>
    </source>
</reference>
<reference key="3">
    <citation type="journal article" date="2004" name="Genome Res.">
        <title>The status, quality, and expansion of the NIH full-length cDNA project: the Mammalian Gene Collection (MGC).</title>
        <authorList>
            <consortium name="The MGC Project Team"/>
        </authorList>
    </citation>
    <scope>NUCLEOTIDE SEQUENCE [LARGE SCALE MRNA] OF 1304-2078</scope>
    <scope>VARIANTS GLU-1383 AND THR-1567</scope>
    <source>
        <tissue>Skin</tissue>
    </source>
</reference>
<reference key="4">
    <citation type="journal article" date="2008" name="Proc. Natl. Acad. Sci. U.S.A.">
        <title>A quantitative atlas of mitotic phosphorylation.</title>
        <authorList>
            <person name="Dephoure N."/>
            <person name="Zhou C."/>
            <person name="Villen J."/>
            <person name="Beausoleil S.A."/>
            <person name="Bakalarski C.E."/>
            <person name="Elledge S.J."/>
            <person name="Gygi S.P."/>
        </authorList>
    </citation>
    <scope>PHOSPHORYLATION [LARGE SCALE ANALYSIS] AT SER-497</scope>
    <scope>IDENTIFICATION BY MASS SPECTROMETRY [LARGE SCALE ANALYSIS]</scope>
    <source>
        <tissue>Cervix carcinoma</tissue>
    </source>
</reference>
<reference key="5">
    <citation type="journal article" date="2012" name="Mol. Biol. Cell">
        <title>Mammalian Atg2 proteins are essential for autophagosome formation and important for regulation of size and distribution of lipid droplets.</title>
        <authorList>
            <person name="Velikkakath A.K."/>
            <person name="Nishimura T."/>
            <person name="Oita E."/>
            <person name="Ishihara N."/>
            <person name="Mizushima N."/>
        </authorList>
    </citation>
    <scope>FUNCTION</scope>
    <scope>SUBCELLULAR LOCATION</scope>
</reference>
<reference key="6">
    <citation type="journal article" date="2013" name="J. Proteome Res.">
        <title>Toward a comprehensive characterization of a human cancer cell phosphoproteome.</title>
        <authorList>
            <person name="Zhou H."/>
            <person name="Di Palma S."/>
            <person name="Preisinger C."/>
            <person name="Peng M."/>
            <person name="Polat A.N."/>
            <person name="Heck A.J."/>
            <person name="Mohammed S."/>
        </authorList>
    </citation>
    <scope>PHOSPHORYLATION [LARGE SCALE ANALYSIS] AT SER-255; SER-840 AND SER-899</scope>
    <scope>IDENTIFICATION BY MASS SPECTROMETRY [LARGE SCALE ANALYSIS]</scope>
    <source>
        <tissue>Cervix carcinoma</tissue>
        <tissue>Erythroleukemia</tissue>
    </source>
</reference>
<reference key="7">
    <citation type="journal article" date="2014" name="J. Proteomics">
        <title>An enzyme assisted RP-RPLC approach for in-depth analysis of human liver phosphoproteome.</title>
        <authorList>
            <person name="Bian Y."/>
            <person name="Song C."/>
            <person name="Cheng K."/>
            <person name="Dong M."/>
            <person name="Wang F."/>
            <person name="Huang J."/>
            <person name="Sun D."/>
            <person name="Wang L."/>
            <person name="Ye M."/>
            <person name="Zou H."/>
        </authorList>
    </citation>
    <scope>PHOSPHORYLATION [LARGE SCALE ANALYSIS] AT SER-255; SER-886; SER-1018 AND SER-1526</scope>
    <scope>IDENTIFICATION BY MASS SPECTROMETRY [LARGE SCALE ANALYSIS]</scope>
    <source>
        <tissue>Liver</tissue>
    </source>
</reference>
<reference key="8">
    <citation type="journal article" date="2017" name="Autophagy">
        <title>Architecture of the ATG2B-WDR45 complex and an aromatic Y/HF motif crucial for complex formation.</title>
        <authorList>
            <person name="Zheng J.X."/>
            <person name="Li Y."/>
            <person name="Ding Y.H."/>
            <person name="Liu J.J."/>
            <person name="Zhang M.J."/>
            <person name="Dong M.Q."/>
            <person name="Wang H.W."/>
            <person name="Yu L."/>
        </authorList>
    </citation>
    <scope>INTERACTION WITH WDR45</scope>
    <scope>MUTAGENESIS OF 1025-TYR--SER-1027</scope>
</reference>
<reference key="9">
    <citation type="journal article" date="2020" name="Genes Cells">
        <title>Human ATG2B possesses a lipid transfer activity which is accelerated by negatively charged lipids and WIPI4.</title>
        <authorList>
            <person name="Osawa T."/>
            <person name="Ishii Y."/>
            <person name="Noda N.N."/>
        </authorList>
    </citation>
    <scope>FUNCTION</scope>
    <scope>CATALYTIC ACTIVITY</scope>
</reference>
<organism>
    <name type="scientific">Homo sapiens</name>
    <name type="common">Human</name>
    <dbReference type="NCBI Taxonomy" id="9606"/>
    <lineage>
        <taxon>Eukaryota</taxon>
        <taxon>Metazoa</taxon>
        <taxon>Chordata</taxon>
        <taxon>Craniata</taxon>
        <taxon>Vertebrata</taxon>
        <taxon>Euteleostomi</taxon>
        <taxon>Mammalia</taxon>
        <taxon>Eutheria</taxon>
        <taxon>Euarchontoglires</taxon>
        <taxon>Primates</taxon>
        <taxon>Haplorrhini</taxon>
        <taxon>Catarrhini</taxon>
        <taxon>Hominidae</taxon>
        <taxon>Homo</taxon>
    </lineage>
</organism>
<comment type="function">
    <text evidence="2 8 10">Lipid transfer protein required for both autophagosome formation and regulation of lipid droplet morphology and dispersion (PubMed:22219374, PubMed:31721365). Tethers the edge of the isolation membrane (IM) to the endoplasmic reticulum (ER) and mediates direct lipid transfer from ER to IM for IM expansion (PubMed:22219374, PubMed:31721365). Binds to the ER exit site (ERES), which is the membrane source for autophagosome formation, and extracts phospholipids from the membrane source and transfers them to ATG9 (ATG9A or ATG9B) to the IM for membrane expansion (By similarity). Lipid transfer activity is enhanced by WDR45/WIPI4, which promotes ATG2B-association with phosphatidylinositol 3-monophosphate (PI3P)-containing membranes (PubMed:31721365).</text>
</comment>
<comment type="catalytic activity">
    <reaction evidence="2">
        <text>a 1,2-diacyl-sn-glycero-3-phospho-L-serine(in) = a 1,2-diacyl-sn-glycero-3-phospho-L-serine(out)</text>
        <dbReference type="Rhea" id="RHEA:38663"/>
        <dbReference type="ChEBI" id="CHEBI:57262"/>
    </reaction>
</comment>
<comment type="catalytic activity">
    <reaction evidence="10">
        <text>a 1,2-diacyl-sn-glycero-3-phosphoethanolamine(in) = a 1,2-diacyl-sn-glycero-3-phosphoethanolamine(out)</text>
        <dbReference type="Rhea" id="RHEA:38895"/>
        <dbReference type="ChEBI" id="CHEBI:64612"/>
    </reaction>
</comment>
<comment type="subunit">
    <text evidence="10">Interacts with WDR45/WIPI4.</text>
</comment>
<comment type="interaction">
    <interactant intactId="EBI-2963262">
        <id>Q96BY7</id>
    </interactant>
    <interactant intactId="EBI-2682844">
        <id>Q9Y484</id>
        <label>WDR45</label>
    </interactant>
    <organismsDiffer>false</organismsDiffer>
    <experiments>4</experiments>
</comment>
<comment type="subcellular location">
    <subcellularLocation>
        <location evidence="8">Preautophagosomal structure membrane</location>
        <topology evidence="8">Peripheral membrane protein</topology>
    </subcellularLocation>
    <subcellularLocation>
        <location evidence="8">Lipid droplet</location>
    </subcellularLocation>
    <subcellularLocation>
        <location evidence="1">Endoplasmic reticulum membrane</location>
        <topology evidence="1">Peripheral membrane protein</topology>
    </subcellularLocation>
</comment>
<comment type="domain">
    <text evidence="2">The chorein N-terminal domain mediates lipid transfer activity.</text>
</comment>
<comment type="similarity">
    <text evidence="12">Belongs to the ATG2 family.</text>
</comment>
<comment type="sequence caution" evidence="12">
    <conflict type="erroneous initiation">
        <sequence resource="EMBL-CDS" id="BAA91504"/>
    </conflict>
    <text>Truncated N-terminus.</text>
</comment>
<comment type="sequence caution" evidence="12">
    <conflict type="erroneous termination">
        <sequence resource="EMBL-CDS" id="BAB70872"/>
    </conflict>
    <text>Truncated C-terminus.</text>
</comment>
<comment type="sequence caution" evidence="12">
    <conflict type="erroneous initiation">
        <sequence resource="EMBL-CDS" id="BAC87363"/>
    </conflict>
    <text>Truncated N-terminus.</text>
</comment>
<gene>
    <name evidence="11 13" type="primary">ATG2B</name>
    <name evidence="13" type="synonym">C14orf103</name>
</gene>
<evidence type="ECO:0000250" key="1">
    <source>
        <dbReference type="UniProtKB" id="P53855"/>
    </source>
</evidence>
<evidence type="ECO:0000250" key="2">
    <source>
        <dbReference type="UniProtKB" id="Q2TAZ0"/>
    </source>
</evidence>
<evidence type="ECO:0000250" key="3">
    <source>
        <dbReference type="UniProtKB" id="Q80XK6"/>
    </source>
</evidence>
<evidence type="ECO:0000255" key="4"/>
<evidence type="ECO:0000256" key="5">
    <source>
        <dbReference type="SAM" id="MobiDB-lite"/>
    </source>
</evidence>
<evidence type="ECO:0000269" key="6">
    <source>
    </source>
</evidence>
<evidence type="ECO:0000269" key="7">
    <source>
    </source>
</evidence>
<evidence type="ECO:0000269" key="8">
    <source>
    </source>
</evidence>
<evidence type="ECO:0000269" key="9">
    <source>
    </source>
</evidence>
<evidence type="ECO:0000269" key="10">
    <source>
    </source>
</evidence>
<evidence type="ECO:0000303" key="11">
    <source>
    </source>
</evidence>
<evidence type="ECO:0000305" key="12"/>
<evidence type="ECO:0000312" key="13">
    <source>
        <dbReference type="HGNC" id="HGNC:20187"/>
    </source>
</evidence>
<evidence type="ECO:0007744" key="14">
    <source>
    </source>
</evidence>
<evidence type="ECO:0007744" key="15">
    <source>
    </source>
</evidence>
<evidence type="ECO:0007744" key="16">
    <source>
    </source>
</evidence>